<organism>
    <name type="scientific">Pectobacterium carotovorum subsp. carotovorum (strain PC1)</name>
    <dbReference type="NCBI Taxonomy" id="561230"/>
    <lineage>
        <taxon>Bacteria</taxon>
        <taxon>Pseudomonadati</taxon>
        <taxon>Pseudomonadota</taxon>
        <taxon>Gammaproteobacteria</taxon>
        <taxon>Enterobacterales</taxon>
        <taxon>Pectobacteriaceae</taxon>
        <taxon>Pectobacterium</taxon>
    </lineage>
</organism>
<dbReference type="EC" id="2.8.1.4" evidence="1"/>
<dbReference type="EMBL" id="CP001657">
    <property type="protein sequence ID" value="ACT12082.1"/>
    <property type="molecule type" value="Genomic_DNA"/>
</dbReference>
<dbReference type="RefSeq" id="WP_012773715.1">
    <property type="nucleotide sequence ID" value="NC_012917.1"/>
</dbReference>
<dbReference type="SMR" id="C6DB40"/>
<dbReference type="STRING" id="561230.PC1_1033"/>
<dbReference type="KEGG" id="pct:PC1_1033"/>
<dbReference type="eggNOG" id="COG0301">
    <property type="taxonomic scope" value="Bacteria"/>
</dbReference>
<dbReference type="eggNOG" id="COG0607">
    <property type="taxonomic scope" value="Bacteria"/>
</dbReference>
<dbReference type="HOGENOM" id="CLU_037952_4_1_6"/>
<dbReference type="OrthoDB" id="9773948at2"/>
<dbReference type="UniPathway" id="UPA00060"/>
<dbReference type="Proteomes" id="UP000002736">
    <property type="component" value="Chromosome"/>
</dbReference>
<dbReference type="GO" id="GO:0005829">
    <property type="term" value="C:cytosol"/>
    <property type="evidence" value="ECO:0007669"/>
    <property type="project" value="TreeGrafter"/>
</dbReference>
<dbReference type="GO" id="GO:0005524">
    <property type="term" value="F:ATP binding"/>
    <property type="evidence" value="ECO:0007669"/>
    <property type="project" value="UniProtKB-UniRule"/>
</dbReference>
<dbReference type="GO" id="GO:0004810">
    <property type="term" value="F:CCA tRNA nucleotidyltransferase activity"/>
    <property type="evidence" value="ECO:0007669"/>
    <property type="project" value="InterPro"/>
</dbReference>
<dbReference type="GO" id="GO:0000049">
    <property type="term" value="F:tRNA binding"/>
    <property type="evidence" value="ECO:0007669"/>
    <property type="project" value="UniProtKB-UniRule"/>
</dbReference>
<dbReference type="GO" id="GO:0140741">
    <property type="term" value="F:tRNA-uracil-4 sulfurtransferase activity"/>
    <property type="evidence" value="ECO:0007669"/>
    <property type="project" value="UniProtKB-EC"/>
</dbReference>
<dbReference type="GO" id="GO:0009228">
    <property type="term" value="P:thiamine biosynthetic process"/>
    <property type="evidence" value="ECO:0007669"/>
    <property type="project" value="UniProtKB-KW"/>
</dbReference>
<dbReference type="GO" id="GO:0009229">
    <property type="term" value="P:thiamine diphosphate biosynthetic process"/>
    <property type="evidence" value="ECO:0007669"/>
    <property type="project" value="UniProtKB-UniRule"/>
</dbReference>
<dbReference type="GO" id="GO:0052837">
    <property type="term" value="P:thiazole biosynthetic process"/>
    <property type="evidence" value="ECO:0007669"/>
    <property type="project" value="InterPro"/>
</dbReference>
<dbReference type="GO" id="GO:0002937">
    <property type="term" value="P:tRNA 4-thiouridine biosynthesis"/>
    <property type="evidence" value="ECO:0007669"/>
    <property type="project" value="TreeGrafter"/>
</dbReference>
<dbReference type="CDD" id="cd01712">
    <property type="entry name" value="PPase_ThiI"/>
    <property type="match status" value="1"/>
</dbReference>
<dbReference type="CDD" id="cd00158">
    <property type="entry name" value="RHOD"/>
    <property type="match status" value="1"/>
</dbReference>
<dbReference type="CDD" id="cd11716">
    <property type="entry name" value="THUMP_ThiI"/>
    <property type="match status" value="1"/>
</dbReference>
<dbReference type="FunFam" id="3.30.2130.30:FF:000002">
    <property type="entry name" value="tRNA sulfurtransferase"/>
    <property type="match status" value="1"/>
</dbReference>
<dbReference type="FunFam" id="3.40.250.10:FF:000003">
    <property type="entry name" value="tRNA sulfurtransferase"/>
    <property type="match status" value="1"/>
</dbReference>
<dbReference type="FunFam" id="3.40.50.620:FF:000029">
    <property type="entry name" value="tRNA sulfurtransferase"/>
    <property type="match status" value="1"/>
</dbReference>
<dbReference type="Gene3D" id="3.30.2130.30">
    <property type="match status" value="1"/>
</dbReference>
<dbReference type="Gene3D" id="3.40.50.620">
    <property type="entry name" value="HUPs"/>
    <property type="match status" value="1"/>
</dbReference>
<dbReference type="Gene3D" id="3.40.250.10">
    <property type="entry name" value="Rhodanese-like domain"/>
    <property type="match status" value="1"/>
</dbReference>
<dbReference type="HAMAP" id="MF_00021">
    <property type="entry name" value="ThiI"/>
    <property type="match status" value="1"/>
</dbReference>
<dbReference type="InterPro" id="IPR001763">
    <property type="entry name" value="Rhodanese-like_dom"/>
</dbReference>
<dbReference type="InterPro" id="IPR036873">
    <property type="entry name" value="Rhodanese-like_dom_sf"/>
</dbReference>
<dbReference type="InterPro" id="IPR014729">
    <property type="entry name" value="Rossmann-like_a/b/a_fold"/>
</dbReference>
<dbReference type="InterPro" id="IPR020536">
    <property type="entry name" value="ThiI_AANH"/>
</dbReference>
<dbReference type="InterPro" id="IPR054173">
    <property type="entry name" value="ThiI_fer"/>
</dbReference>
<dbReference type="InterPro" id="IPR049961">
    <property type="entry name" value="ThiI_N"/>
</dbReference>
<dbReference type="InterPro" id="IPR026340">
    <property type="entry name" value="THII_Thiazole_biosynth_dom"/>
</dbReference>
<dbReference type="InterPro" id="IPR004114">
    <property type="entry name" value="THUMP_dom"/>
</dbReference>
<dbReference type="InterPro" id="IPR049962">
    <property type="entry name" value="THUMP_ThiI"/>
</dbReference>
<dbReference type="InterPro" id="IPR003720">
    <property type="entry name" value="tRNA_STrfase"/>
</dbReference>
<dbReference type="InterPro" id="IPR050102">
    <property type="entry name" value="tRNA_sulfurtransferase_ThiI"/>
</dbReference>
<dbReference type="NCBIfam" id="TIGR04271">
    <property type="entry name" value="ThiI_C_thiazole"/>
    <property type="match status" value="1"/>
</dbReference>
<dbReference type="NCBIfam" id="TIGR00342">
    <property type="entry name" value="tRNA uracil 4-sulfurtransferase ThiI"/>
    <property type="match status" value="1"/>
</dbReference>
<dbReference type="PANTHER" id="PTHR43209">
    <property type="entry name" value="TRNA SULFURTRANSFERASE"/>
    <property type="match status" value="1"/>
</dbReference>
<dbReference type="PANTHER" id="PTHR43209:SF1">
    <property type="entry name" value="TRNA SULFURTRANSFERASE"/>
    <property type="match status" value="1"/>
</dbReference>
<dbReference type="Pfam" id="PF02568">
    <property type="entry name" value="ThiI"/>
    <property type="match status" value="1"/>
</dbReference>
<dbReference type="Pfam" id="PF22025">
    <property type="entry name" value="ThiI_fer"/>
    <property type="match status" value="1"/>
</dbReference>
<dbReference type="Pfam" id="PF02926">
    <property type="entry name" value="THUMP"/>
    <property type="match status" value="1"/>
</dbReference>
<dbReference type="SMART" id="SM00981">
    <property type="entry name" value="THUMP"/>
    <property type="match status" value="1"/>
</dbReference>
<dbReference type="SUPFAM" id="SSF52402">
    <property type="entry name" value="Adenine nucleotide alpha hydrolases-like"/>
    <property type="match status" value="1"/>
</dbReference>
<dbReference type="SUPFAM" id="SSF52821">
    <property type="entry name" value="Rhodanese/Cell cycle control phosphatase"/>
    <property type="match status" value="1"/>
</dbReference>
<dbReference type="SUPFAM" id="SSF143437">
    <property type="entry name" value="THUMP domain-like"/>
    <property type="match status" value="1"/>
</dbReference>
<dbReference type="PROSITE" id="PS50206">
    <property type="entry name" value="RHODANESE_3"/>
    <property type="match status" value="1"/>
</dbReference>
<dbReference type="PROSITE" id="PS51165">
    <property type="entry name" value="THUMP"/>
    <property type="match status" value="1"/>
</dbReference>
<feature type="chain" id="PRO_1000201917" description="tRNA sulfurtransferase">
    <location>
        <begin position="1"/>
        <end position="482"/>
    </location>
</feature>
<feature type="domain" description="THUMP" evidence="1">
    <location>
        <begin position="61"/>
        <end position="165"/>
    </location>
</feature>
<feature type="domain" description="Rhodanese" evidence="1">
    <location>
        <begin position="404"/>
        <end position="482"/>
    </location>
</feature>
<feature type="active site" description="Cysteine persulfide intermediate" evidence="1">
    <location>
        <position position="456"/>
    </location>
</feature>
<feature type="binding site" evidence="1">
    <location>
        <begin position="183"/>
        <end position="184"/>
    </location>
    <ligand>
        <name>ATP</name>
        <dbReference type="ChEBI" id="CHEBI:30616"/>
    </ligand>
</feature>
<feature type="binding site" evidence="1">
    <location>
        <position position="265"/>
    </location>
    <ligand>
        <name>ATP</name>
        <dbReference type="ChEBI" id="CHEBI:30616"/>
    </ligand>
</feature>
<feature type="binding site" evidence="1">
    <location>
        <position position="287"/>
    </location>
    <ligand>
        <name>ATP</name>
        <dbReference type="ChEBI" id="CHEBI:30616"/>
    </ligand>
</feature>
<feature type="binding site" evidence="1">
    <location>
        <position position="296"/>
    </location>
    <ligand>
        <name>ATP</name>
        <dbReference type="ChEBI" id="CHEBI:30616"/>
    </ligand>
</feature>
<feature type="disulfide bond" description="Redox-active" evidence="1">
    <location>
        <begin position="344"/>
        <end position="456"/>
    </location>
</feature>
<sequence>MKFIIKLFPEITIKSQSVRLRFIKILTGNIRNVLKHYDETLAVVRHWDHIEVRAKDESQRSAIRDALTRIPGIHHILEVEDHAYTDVHNIFEQALALYREQLEGKTFCVRVKRRGKHEFSSQDVERYVGGGLNQHIETARVNLTAPQVTVHLEIEQDRLLLIKGRYEGIGGFPIGTQEDVLSLISGGFDSGVSSYMLMRRGCRVHYCFFNLGGAAHEIGVKQVAHYLWNRFGSSHRVRFIAIDFDPVVGEILEKVDDGQMGVVLKRMMVRAASKIAERYGVQALVTGEALGQVSSQTLTNLRLIDNASDTLILRPLISHDKEHIIKQARELGTEDFAKTMPEYCGVISKSPTVKAVKAKIEAEESHFDFAILERVVSEARNIDIRQIAEQTKQEVVEIETVASFAPTDVLLDIRSPDEQDDKPLELDQIEIKSLPFYKLGTQFGDLDQSKTYLLYCERGVMSRLQALYLREQGFSNVKVYRP</sequence>
<comment type="function">
    <text evidence="1">Catalyzes the ATP-dependent transfer of a sulfur to tRNA to produce 4-thiouridine in position 8 of tRNAs, which functions as a near-UV photosensor. Also catalyzes the transfer of sulfur to the sulfur carrier protein ThiS, forming ThiS-thiocarboxylate. This is a step in the synthesis of thiazole, in the thiamine biosynthesis pathway. The sulfur is donated as persulfide by IscS.</text>
</comment>
<comment type="catalytic activity">
    <reaction evidence="1">
        <text>[ThiI sulfur-carrier protein]-S-sulfanyl-L-cysteine + a uridine in tRNA + 2 reduced [2Fe-2S]-[ferredoxin] + ATP + H(+) = [ThiI sulfur-carrier protein]-L-cysteine + a 4-thiouridine in tRNA + 2 oxidized [2Fe-2S]-[ferredoxin] + AMP + diphosphate</text>
        <dbReference type="Rhea" id="RHEA:24176"/>
        <dbReference type="Rhea" id="RHEA-COMP:10000"/>
        <dbReference type="Rhea" id="RHEA-COMP:10001"/>
        <dbReference type="Rhea" id="RHEA-COMP:13337"/>
        <dbReference type="Rhea" id="RHEA-COMP:13338"/>
        <dbReference type="Rhea" id="RHEA-COMP:13339"/>
        <dbReference type="Rhea" id="RHEA-COMP:13340"/>
        <dbReference type="ChEBI" id="CHEBI:15378"/>
        <dbReference type="ChEBI" id="CHEBI:29950"/>
        <dbReference type="ChEBI" id="CHEBI:30616"/>
        <dbReference type="ChEBI" id="CHEBI:33019"/>
        <dbReference type="ChEBI" id="CHEBI:33737"/>
        <dbReference type="ChEBI" id="CHEBI:33738"/>
        <dbReference type="ChEBI" id="CHEBI:61963"/>
        <dbReference type="ChEBI" id="CHEBI:65315"/>
        <dbReference type="ChEBI" id="CHEBI:136798"/>
        <dbReference type="ChEBI" id="CHEBI:456215"/>
        <dbReference type="EC" id="2.8.1.4"/>
    </reaction>
</comment>
<comment type="catalytic activity">
    <reaction evidence="1">
        <text>[ThiS sulfur-carrier protein]-C-terminal Gly-Gly-AMP + S-sulfanyl-L-cysteinyl-[cysteine desulfurase] + AH2 = [ThiS sulfur-carrier protein]-C-terminal-Gly-aminoethanethioate + L-cysteinyl-[cysteine desulfurase] + A + AMP + 2 H(+)</text>
        <dbReference type="Rhea" id="RHEA:43340"/>
        <dbReference type="Rhea" id="RHEA-COMP:12157"/>
        <dbReference type="Rhea" id="RHEA-COMP:12158"/>
        <dbReference type="Rhea" id="RHEA-COMP:12910"/>
        <dbReference type="Rhea" id="RHEA-COMP:19908"/>
        <dbReference type="ChEBI" id="CHEBI:13193"/>
        <dbReference type="ChEBI" id="CHEBI:15378"/>
        <dbReference type="ChEBI" id="CHEBI:17499"/>
        <dbReference type="ChEBI" id="CHEBI:29950"/>
        <dbReference type="ChEBI" id="CHEBI:61963"/>
        <dbReference type="ChEBI" id="CHEBI:90618"/>
        <dbReference type="ChEBI" id="CHEBI:232372"/>
        <dbReference type="ChEBI" id="CHEBI:456215"/>
    </reaction>
</comment>
<comment type="pathway">
    <text evidence="1">Cofactor biosynthesis; thiamine diphosphate biosynthesis.</text>
</comment>
<comment type="subcellular location">
    <subcellularLocation>
        <location evidence="1">Cytoplasm</location>
    </subcellularLocation>
</comment>
<comment type="similarity">
    <text evidence="1">Belongs to the ThiI family.</text>
</comment>
<protein>
    <recommendedName>
        <fullName evidence="1">tRNA sulfurtransferase</fullName>
        <ecNumber evidence="1">2.8.1.4</ecNumber>
    </recommendedName>
    <alternativeName>
        <fullName evidence="1">Sulfur carrier protein ThiS sulfurtransferase</fullName>
    </alternativeName>
    <alternativeName>
        <fullName evidence="1">Thiamine biosynthesis protein ThiI</fullName>
    </alternativeName>
    <alternativeName>
        <fullName evidence="1">tRNA 4-thiouridine synthase</fullName>
    </alternativeName>
</protein>
<gene>
    <name evidence="1" type="primary">thiI</name>
    <name type="ordered locus">PC1_1033</name>
</gene>
<keyword id="KW-0067">ATP-binding</keyword>
<keyword id="KW-0963">Cytoplasm</keyword>
<keyword id="KW-1015">Disulfide bond</keyword>
<keyword id="KW-0547">Nucleotide-binding</keyword>
<keyword id="KW-0676">Redox-active center</keyword>
<keyword id="KW-0694">RNA-binding</keyword>
<keyword id="KW-0784">Thiamine biosynthesis</keyword>
<keyword id="KW-0808">Transferase</keyword>
<keyword id="KW-0820">tRNA-binding</keyword>
<proteinExistence type="inferred from homology"/>
<reference key="1">
    <citation type="submission" date="2009-07" db="EMBL/GenBank/DDBJ databases">
        <title>Complete sequence of Pectobacterium carotovorum subsp. carotovorum PC1.</title>
        <authorList>
            <consortium name="US DOE Joint Genome Institute"/>
            <person name="Lucas S."/>
            <person name="Copeland A."/>
            <person name="Lapidus A."/>
            <person name="Glavina del Rio T."/>
            <person name="Tice H."/>
            <person name="Bruce D."/>
            <person name="Goodwin L."/>
            <person name="Pitluck S."/>
            <person name="Munk A.C."/>
            <person name="Brettin T."/>
            <person name="Detter J.C."/>
            <person name="Han C."/>
            <person name="Tapia R."/>
            <person name="Larimer F."/>
            <person name="Land M."/>
            <person name="Hauser L."/>
            <person name="Kyrpides N."/>
            <person name="Mikhailova N."/>
            <person name="Balakrishnan V."/>
            <person name="Glasner J."/>
            <person name="Perna N.T."/>
        </authorList>
    </citation>
    <scope>NUCLEOTIDE SEQUENCE [LARGE SCALE GENOMIC DNA]</scope>
    <source>
        <strain>PC1</strain>
    </source>
</reference>
<name>THII_PECCP</name>
<evidence type="ECO:0000255" key="1">
    <source>
        <dbReference type="HAMAP-Rule" id="MF_00021"/>
    </source>
</evidence>
<accession>C6DB40</accession>